<comment type="subcellular location">
    <subcellularLocation>
        <location>Plastid</location>
        <location>Chloroplast</location>
    </subcellularLocation>
</comment>
<comment type="similarity">
    <text evidence="1">Belongs to the bacterial ribosomal protein bL33 family.</text>
</comment>
<sequence>MAKGKDVRAIVILECTSCVRNGVNKESPGISRYITQRNRHNTPNRLELRKFCPYCYKHTIHGEIKK</sequence>
<geneLocation type="chloroplast"/>
<proteinExistence type="inferred from homology"/>
<protein>
    <recommendedName>
        <fullName evidence="1">Large ribosomal subunit protein bL33c</fullName>
    </recommendedName>
    <alternativeName>
        <fullName evidence="2">50S ribosomal protein L33, chloroplastic</fullName>
    </alternativeName>
</protein>
<reference key="1">
    <citation type="journal article" date="2007" name="Mol. Phylogenet. Evol.">
        <title>Phylogenetic and evolutionary implications of complete chloroplast genome sequences of four early-diverging angiosperms: Buxus (Buxaceae), Chloranthus (Chloranthaceae), Dioscorea (Dioscoreaceae), and Illicium (Schisandraceae).</title>
        <authorList>
            <person name="Hansen D.R."/>
            <person name="Dastidar S.G."/>
            <person name="Cai Z."/>
            <person name="Penaflor C."/>
            <person name="Kuehl J.V."/>
            <person name="Boore J.L."/>
            <person name="Jansen R.K."/>
        </authorList>
    </citation>
    <scope>NUCLEOTIDE SEQUENCE [LARGE SCALE GENOMIC DNA]</scope>
</reference>
<organism>
    <name type="scientific">Chloranthus spicatus</name>
    <name type="common">Chulantree</name>
    <name type="synonym">Nigrina spicata</name>
    <dbReference type="NCBI Taxonomy" id="13006"/>
    <lineage>
        <taxon>Eukaryota</taxon>
        <taxon>Viridiplantae</taxon>
        <taxon>Streptophyta</taxon>
        <taxon>Embryophyta</taxon>
        <taxon>Tracheophyta</taxon>
        <taxon>Spermatophyta</taxon>
        <taxon>Magnoliopsida</taxon>
        <taxon>Chloranthales</taxon>
        <taxon>Chloranthaceae</taxon>
        <taxon>Chloranthus</taxon>
    </lineage>
</organism>
<accession>A6MME3</accession>
<keyword id="KW-0150">Chloroplast</keyword>
<keyword id="KW-0934">Plastid</keyword>
<keyword id="KW-0687">Ribonucleoprotein</keyword>
<keyword id="KW-0689">Ribosomal protein</keyword>
<feature type="chain" id="PRO_0000356791" description="Large ribosomal subunit protein bL33c">
    <location>
        <begin position="1"/>
        <end position="66"/>
    </location>
</feature>
<name>RK33_CHLSC</name>
<evidence type="ECO:0000255" key="1">
    <source>
        <dbReference type="HAMAP-Rule" id="MF_00294"/>
    </source>
</evidence>
<evidence type="ECO:0000305" key="2"/>
<dbReference type="EMBL" id="EF380352">
    <property type="protein sequence ID" value="ABQ43281.1"/>
    <property type="molecule type" value="Genomic_DNA"/>
</dbReference>
<dbReference type="RefSeq" id="YP_001294119.1">
    <property type="nucleotide sequence ID" value="NC_009598.1"/>
</dbReference>
<dbReference type="GeneID" id="5236424"/>
<dbReference type="GO" id="GO:0009507">
    <property type="term" value="C:chloroplast"/>
    <property type="evidence" value="ECO:0007669"/>
    <property type="project" value="UniProtKB-SubCell"/>
</dbReference>
<dbReference type="GO" id="GO:1990904">
    <property type="term" value="C:ribonucleoprotein complex"/>
    <property type="evidence" value="ECO:0007669"/>
    <property type="project" value="UniProtKB-KW"/>
</dbReference>
<dbReference type="GO" id="GO:0005840">
    <property type="term" value="C:ribosome"/>
    <property type="evidence" value="ECO:0007669"/>
    <property type="project" value="UniProtKB-KW"/>
</dbReference>
<dbReference type="GO" id="GO:0003735">
    <property type="term" value="F:structural constituent of ribosome"/>
    <property type="evidence" value="ECO:0007669"/>
    <property type="project" value="InterPro"/>
</dbReference>
<dbReference type="GO" id="GO:0006412">
    <property type="term" value="P:translation"/>
    <property type="evidence" value="ECO:0007669"/>
    <property type="project" value="UniProtKB-UniRule"/>
</dbReference>
<dbReference type="Gene3D" id="2.20.28.120">
    <property type="entry name" value="Ribosomal protein L33"/>
    <property type="match status" value="1"/>
</dbReference>
<dbReference type="HAMAP" id="MF_00294">
    <property type="entry name" value="Ribosomal_bL33"/>
    <property type="match status" value="1"/>
</dbReference>
<dbReference type="InterPro" id="IPR001705">
    <property type="entry name" value="Ribosomal_bL33"/>
</dbReference>
<dbReference type="InterPro" id="IPR018264">
    <property type="entry name" value="Ribosomal_bL33_CS"/>
</dbReference>
<dbReference type="InterPro" id="IPR038584">
    <property type="entry name" value="Ribosomal_bL33_sf"/>
</dbReference>
<dbReference type="InterPro" id="IPR011332">
    <property type="entry name" value="Ribosomal_zn-bd"/>
</dbReference>
<dbReference type="NCBIfam" id="NF001764">
    <property type="entry name" value="PRK00504.1"/>
    <property type="match status" value="1"/>
</dbReference>
<dbReference type="NCBIfam" id="NF001860">
    <property type="entry name" value="PRK00595.1"/>
    <property type="match status" value="1"/>
</dbReference>
<dbReference type="NCBIfam" id="TIGR01023">
    <property type="entry name" value="rpmG_bact"/>
    <property type="match status" value="1"/>
</dbReference>
<dbReference type="PANTHER" id="PTHR43168">
    <property type="entry name" value="50S RIBOSOMAL PROTEIN L33, CHLOROPLASTIC"/>
    <property type="match status" value="1"/>
</dbReference>
<dbReference type="PANTHER" id="PTHR43168:SF2">
    <property type="entry name" value="LARGE RIBOSOMAL SUBUNIT PROTEIN BL33C"/>
    <property type="match status" value="1"/>
</dbReference>
<dbReference type="Pfam" id="PF00471">
    <property type="entry name" value="Ribosomal_L33"/>
    <property type="match status" value="1"/>
</dbReference>
<dbReference type="SUPFAM" id="SSF57829">
    <property type="entry name" value="Zn-binding ribosomal proteins"/>
    <property type="match status" value="1"/>
</dbReference>
<dbReference type="PROSITE" id="PS00582">
    <property type="entry name" value="RIBOSOMAL_L33"/>
    <property type="match status" value="1"/>
</dbReference>
<gene>
    <name evidence="1" type="primary">rpl33</name>
</gene>